<keyword id="KW-0378">Hydrolase</keyword>
<keyword id="KW-0408">Iron</keyword>
<keyword id="KW-0479">Metal-binding</keyword>
<keyword id="KW-0648">Protein biosynthesis</keyword>
<sequence>MAVRKILKIGNPILRQTSEDVSESEIQTKDFKKLIRDMFETMRHADGVGLAAPQIGVLKKLVVVGQEDDNERYPGTPEVPNQIILNPEITPLSPPRDGFWEGCLSVPGMRGYVERPNKIRMKWRDENYVEHDEIIEGYRAIVLQHECDHLFGVLYVDRLKSTKLFGYNEDIDTAGKLLD</sequence>
<dbReference type="EC" id="3.5.1.88" evidence="1"/>
<dbReference type="EMBL" id="CP000777">
    <property type="protein sequence ID" value="ABZ94032.1"/>
    <property type="molecule type" value="Genomic_DNA"/>
</dbReference>
<dbReference type="RefSeq" id="WP_012388559.1">
    <property type="nucleotide sequence ID" value="NC_010842.1"/>
</dbReference>
<dbReference type="SMR" id="B0SHH1"/>
<dbReference type="KEGG" id="lbf:LBF_1521"/>
<dbReference type="HOGENOM" id="CLU_061901_5_2_12"/>
<dbReference type="GO" id="GO:0046872">
    <property type="term" value="F:metal ion binding"/>
    <property type="evidence" value="ECO:0007669"/>
    <property type="project" value="UniProtKB-KW"/>
</dbReference>
<dbReference type="GO" id="GO:0042586">
    <property type="term" value="F:peptide deformylase activity"/>
    <property type="evidence" value="ECO:0007669"/>
    <property type="project" value="UniProtKB-UniRule"/>
</dbReference>
<dbReference type="GO" id="GO:0043686">
    <property type="term" value="P:co-translational protein modification"/>
    <property type="evidence" value="ECO:0007669"/>
    <property type="project" value="TreeGrafter"/>
</dbReference>
<dbReference type="GO" id="GO:0006412">
    <property type="term" value="P:translation"/>
    <property type="evidence" value="ECO:0007669"/>
    <property type="project" value="UniProtKB-UniRule"/>
</dbReference>
<dbReference type="CDD" id="cd00487">
    <property type="entry name" value="Pep_deformylase"/>
    <property type="match status" value="1"/>
</dbReference>
<dbReference type="FunFam" id="3.90.45.10:FF:000003">
    <property type="entry name" value="Peptide deformylase"/>
    <property type="match status" value="1"/>
</dbReference>
<dbReference type="Gene3D" id="3.90.45.10">
    <property type="entry name" value="Peptide deformylase"/>
    <property type="match status" value="1"/>
</dbReference>
<dbReference type="HAMAP" id="MF_00163">
    <property type="entry name" value="Pep_deformylase"/>
    <property type="match status" value="1"/>
</dbReference>
<dbReference type="InterPro" id="IPR023635">
    <property type="entry name" value="Peptide_deformylase"/>
</dbReference>
<dbReference type="InterPro" id="IPR036821">
    <property type="entry name" value="Peptide_deformylase_sf"/>
</dbReference>
<dbReference type="NCBIfam" id="TIGR00079">
    <property type="entry name" value="pept_deformyl"/>
    <property type="match status" value="1"/>
</dbReference>
<dbReference type="NCBIfam" id="NF001159">
    <property type="entry name" value="PRK00150.1-3"/>
    <property type="match status" value="1"/>
</dbReference>
<dbReference type="PANTHER" id="PTHR10458">
    <property type="entry name" value="PEPTIDE DEFORMYLASE"/>
    <property type="match status" value="1"/>
</dbReference>
<dbReference type="PANTHER" id="PTHR10458:SF20">
    <property type="entry name" value="PEPTIDE DEFORMYLASE 1"/>
    <property type="match status" value="1"/>
</dbReference>
<dbReference type="Pfam" id="PF01327">
    <property type="entry name" value="Pep_deformylase"/>
    <property type="match status" value="1"/>
</dbReference>
<dbReference type="PIRSF" id="PIRSF004749">
    <property type="entry name" value="Pep_def"/>
    <property type="match status" value="1"/>
</dbReference>
<dbReference type="PRINTS" id="PR01576">
    <property type="entry name" value="PDEFORMYLASE"/>
</dbReference>
<dbReference type="SUPFAM" id="SSF56420">
    <property type="entry name" value="Peptide deformylase"/>
    <property type="match status" value="1"/>
</dbReference>
<evidence type="ECO:0000255" key="1">
    <source>
        <dbReference type="HAMAP-Rule" id="MF_00163"/>
    </source>
</evidence>
<feature type="chain" id="PRO_1000097321" description="Peptide deformylase">
    <location>
        <begin position="1"/>
        <end position="179"/>
    </location>
</feature>
<feature type="active site" evidence="1">
    <location>
        <position position="146"/>
    </location>
</feature>
<feature type="binding site" evidence="1">
    <location>
        <position position="103"/>
    </location>
    <ligand>
        <name>Fe cation</name>
        <dbReference type="ChEBI" id="CHEBI:24875"/>
    </ligand>
</feature>
<feature type="binding site" evidence="1">
    <location>
        <position position="145"/>
    </location>
    <ligand>
        <name>Fe cation</name>
        <dbReference type="ChEBI" id="CHEBI:24875"/>
    </ligand>
</feature>
<feature type="binding site" evidence="1">
    <location>
        <position position="149"/>
    </location>
    <ligand>
        <name>Fe cation</name>
        <dbReference type="ChEBI" id="CHEBI:24875"/>
    </ligand>
</feature>
<gene>
    <name evidence="1" type="primary">def</name>
    <name type="ordered locus">LBF_1521</name>
</gene>
<comment type="function">
    <text evidence="1">Removes the formyl group from the N-terminal Met of newly synthesized proteins. Requires at least a dipeptide for an efficient rate of reaction. N-terminal L-methionine is a prerequisite for activity but the enzyme has broad specificity at other positions.</text>
</comment>
<comment type="catalytic activity">
    <reaction evidence="1">
        <text>N-terminal N-formyl-L-methionyl-[peptide] + H2O = N-terminal L-methionyl-[peptide] + formate</text>
        <dbReference type="Rhea" id="RHEA:24420"/>
        <dbReference type="Rhea" id="RHEA-COMP:10639"/>
        <dbReference type="Rhea" id="RHEA-COMP:10640"/>
        <dbReference type="ChEBI" id="CHEBI:15377"/>
        <dbReference type="ChEBI" id="CHEBI:15740"/>
        <dbReference type="ChEBI" id="CHEBI:49298"/>
        <dbReference type="ChEBI" id="CHEBI:64731"/>
        <dbReference type="EC" id="3.5.1.88"/>
    </reaction>
</comment>
<comment type="cofactor">
    <cofactor evidence="1">
        <name>Fe(2+)</name>
        <dbReference type="ChEBI" id="CHEBI:29033"/>
    </cofactor>
    <text evidence="1">Binds 1 Fe(2+) ion.</text>
</comment>
<comment type="similarity">
    <text evidence="1">Belongs to the polypeptide deformylase family.</text>
</comment>
<accession>B0SHH1</accession>
<reference key="1">
    <citation type="journal article" date="2008" name="PLoS ONE">
        <title>Genome sequence of the saprophyte Leptospira biflexa provides insights into the evolution of Leptospira and the pathogenesis of leptospirosis.</title>
        <authorList>
            <person name="Picardeau M."/>
            <person name="Bulach D.M."/>
            <person name="Bouchier C."/>
            <person name="Zuerner R.L."/>
            <person name="Zidane N."/>
            <person name="Wilson P.J."/>
            <person name="Creno S."/>
            <person name="Kuczek E.S."/>
            <person name="Bommezzadri S."/>
            <person name="Davis J.C."/>
            <person name="McGrath A."/>
            <person name="Johnson M.J."/>
            <person name="Boursaux-Eude C."/>
            <person name="Seemann T."/>
            <person name="Rouy Z."/>
            <person name="Coppel R.L."/>
            <person name="Rood J.I."/>
            <person name="Lajus A."/>
            <person name="Davies J.K."/>
            <person name="Medigue C."/>
            <person name="Adler B."/>
        </authorList>
    </citation>
    <scope>NUCLEOTIDE SEQUENCE [LARGE SCALE GENOMIC DNA]</scope>
    <source>
        <strain>Patoc 1 / Ames</strain>
    </source>
</reference>
<organism>
    <name type="scientific">Leptospira biflexa serovar Patoc (strain Patoc 1 / Ames)</name>
    <dbReference type="NCBI Taxonomy" id="355278"/>
    <lineage>
        <taxon>Bacteria</taxon>
        <taxon>Pseudomonadati</taxon>
        <taxon>Spirochaetota</taxon>
        <taxon>Spirochaetia</taxon>
        <taxon>Leptospirales</taxon>
        <taxon>Leptospiraceae</taxon>
        <taxon>Leptospira</taxon>
    </lineage>
</organism>
<name>DEF_LEPBA</name>
<proteinExistence type="inferred from homology"/>
<protein>
    <recommendedName>
        <fullName evidence="1">Peptide deformylase</fullName>
        <shortName evidence="1">PDF</shortName>
        <ecNumber evidence="1">3.5.1.88</ecNumber>
    </recommendedName>
    <alternativeName>
        <fullName evidence="1">Polypeptide deformylase</fullName>
    </alternativeName>
</protein>